<reference evidence="18" key="1">
    <citation type="submission" date="2003-07" db="EMBL/GenBank/DDBJ databases">
        <title>Cloning of mouse ribosomal protein S6 kinase, 90kDa, polypeptide 5 (RPS6KA5).</title>
        <authorList>
            <person name="Zhou G."/>
            <person name="Wang J."/>
            <person name="Xu W."/>
        </authorList>
    </citation>
    <scope>NUCLEOTIDE SEQUENCE [MRNA] (ISOFORMS 1 AND 2)</scope>
    <source>
        <strain>C57BL/6J</strain>
    </source>
</reference>
<reference key="2">
    <citation type="journal article" date="2005" name="Science">
        <title>The transcriptional landscape of the mammalian genome.</title>
        <authorList>
            <person name="Carninci P."/>
            <person name="Kasukawa T."/>
            <person name="Katayama S."/>
            <person name="Gough J."/>
            <person name="Frith M.C."/>
            <person name="Maeda N."/>
            <person name="Oyama R."/>
            <person name="Ravasi T."/>
            <person name="Lenhard B."/>
            <person name="Wells C."/>
            <person name="Kodzius R."/>
            <person name="Shimokawa K."/>
            <person name="Bajic V.B."/>
            <person name="Brenner S.E."/>
            <person name="Batalov S."/>
            <person name="Forrest A.R."/>
            <person name="Zavolan M."/>
            <person name="Davis M.J."/>
            <person name="Wilming L.G."/>
            <person name="Aidinis V."/>
            <person name="Allen J.E."/>
            <person name="Ambesi-Impiombato A."/>
            <person name="Apweiler R."/>
            <person name="Aturaliya R.N."/>
            <person name="Bailey T.L."/>
            <person name="Bansal M."/>
            <person name="Baxter L."/>
            <person name="Beisel K.W."/>
            <person name="Bersano T."/>
            <person name="Bono H."/>
            <person name="Chalk A.M."/>
            <person name="Chiu K.P."/>
            <person name="Choudhary V."/>
            <person name="Christoffels A."/>
            <person name="Clutterbuck D.R."/>
            <person name="Crowe M.L."/>
            <person name="Dalla E."/>
            <person name="Dalrymple B.P."/>
            <person name="de Bono B."/>
            <person name="Della Gatta G."/>
            <person name="di Bernardo D."/>
            <person name="Down T."/>
            <person name="Engstrom P."/>
            <person name="Fagiolini M."/>
            <person name="Faulkner G."/>
            <person name="Fletcher C.F."/>
            <person name="Fukushima T."/>
            <person name="Furuno M."/>
            <person name="Futaki S."/>
            <person name="Gariboldi M."/>
            <person name="Georgii-Hemming P."/>
            <person name="Gingeras T.R."/>
            <person name="Gojobori T."/>
            <person name="Green R.E."/>
            <person name="Gustincich S."/>
            <person name="Harbers M."/>
            <person name="Hayashi Y."/>
            <person name="Hensch T.K."/>
            <person name="Hirokawa N."/>
            <person name="Hill D."/>
            <person name="Huminiecki L."/>
            <person name="Iacono M."/>
            <person name="Ikeo K."/>
            <person name="Iwama A."/>
            <person name="Ishikawa T."/>
            <person name="Jakt M."/>
            <person name="Kanapin A."/>
            <person name="Katoh M."/>
            <person name="Kawasawa Y."/>
            <person name="Kelso J."/>
            <person name="Kitamura H."/>
            <person name="Kitano H."/>
            <person name="Kollias G."/>
            <person name="Krishnan S.P."/>
            <person name="Kruger A."/>
            <person name="Kummerfeld S.K."/>
            <person name="Kurochkin I.V."/>
            <person name="Lareau L.F."/>
            <person name="Lazarevic D."/>
            <person name="Lipovich L."/>
            <person name="Liu J."/>
            <person name="Liuni S."/>
            <person name="McWilliam S."/>
            <person name="Madan Babu M."/>
            <person name="Madera M."/>
            <person name="Marchionni L."/>
            <person name="Matsuda H."/>
            <person name="Matsuzawa S."/>
            <person name="Miki H."/>
            <person name="Mignone F."/>
            <person name="Miyake S."/>
            <person name="Morris K."/>
            <person name="Mottagui-Tabar S."/>
            <person name="Mulder N."/>
            <person name="Nakano N."/>
            <person name="Nakauchi H."/>
            <person name="Ng P."/>
            <person name="Nilsson R."/>
            <person name="Nishiguchi S."/>
            <person name="Nishikawa S."/>
            <person name="Nori F."/>
            <person name="Ohara O."/>
            <person name="Okazaki Y."/>
            <person name="Orlando V."/>
            <person name="Pang K.C."/>
            <person name="Pavan W.J."/>
            <person name="Pavesi G."/>
            <person name="Pesole G."/>
            <person name="Petrovsky N."/>
            <person name="Piazza S."/>
            <person name="Reed J."/>
            <person name="Reid J.F."/>
            <person name="Ring B.Z."/>
            <person name="Ringwald M."/>
            <person name="Rost B."/>
            <person name="Ruan Y."/>
            <person name="Salzberg S.L."/>
            <person name="Sandelin A."/>
            <person name="Schneider C."/>
            <person name="Schoenbach C."/>
            <person name="Sekiguchi K."/>
            <person name="Semple C.A."/>
            <person name="Seno S."/>
            <person name="Sessa L."/>
            <person name="Sheng Y."/>
            <person name="Shibata Y."/>
            <person name="Shimada H."/>
            <person name="Shimada K."/>
            <person name="Silva D."/>
            <person name="Sinclair B."/>
            <person name="Sperling S."/>
            <person name="Stupka E."/>
            <person name="Sugiura K."/>
            <person name="Sultana R."/>
            <person name="Takenaka Y."/>
            <person name="Taki K."/>
            <person name="Tammoja K."/>
            <person name="Tan S.L."/>
            <person name="Tang S."/>
            <person name="Taylor M.S."/>
            <person name="Tegner J."/>
            <person name="Teichmann S.A."/>
            <person name="Ueda H.R."/>
            <person name="van Nimwegen E."/>
            <person name="Verardo R."/>
            <person name="Wei C.L."/>
            <person name="Yagi K."/>
            <person name="Yamanishi H."/>
            <person name="Zabarovsky E."/>
            <person name="Zhu S."/>
            <person name="Zimmer A."/>
            <person name="Hide W."/>
            <person name="Bult C."/>
            <person name="Grimmond S.M."/>
            <person name="Teasdale R.D."/>
            <person name="Liu E.T."/>
            <person name="Brusic V."/>
            <person name="Quackenbush J."/>
            <person name="Wahlestedt C."/>
            <person name="Mattick J.S."/>
            <person name="Hume D.A."/>
            <person name="Kai C."/>
            <person name="Sasaki D."/>
            <person name="Tomaru Y."/>
            <person name="Fukuda S."/>
            <person name="Kanamori-Katayama M."/>
            <person name="Suzuki M."/>
            <person name="Aoki J."/>
            <person name="Arakawa T."/>
            <person name="Iida J."/>
            <person name="Imamura K."/>
            <person name="Itoh M."/>
            <person name="Kato T."/>
            <person name="Kawaji H."/>
            <person name="Kawagashira N."/>
            <person name="Kawashima T."/>
            <person name="Kojima M."/>
            <person name="Kondo S."/>
            <person name="Konno H."/>
            <person name="Nakano K."/>
            <person name="Ninomiya N."/>
            <person name="Nishio T."/>
            <person name="Okada M."/>
            <person name="Plessy C."/>
            <person name="Shibata K."/>
            <person name="Shiraki T."/>
            <person name="Suzuki S."/>
            <person name="Tagami M."/>
            <person name="Waki K."/>
            <person name="Watahiki A."/>
            <person name="Okamura-Oho Y."/>
            <person name="Suzuki H."/>
            <person name="Kawai J."/>
            <person name="Hayashizaki Y."/>
        </authorList>
    </citation>
    <scope>NUCLEOTIDE SEQUENCE [LARGE SCALE MRNA] (ISOFORM 1)</scope>
    <source>
        <strain>C57BL/6J</strain>
        <tissue>Brain</tissue>
    </source>
</reference>
<reference key="3">
    <citation type="journal article" date="2004" name="Genome Res.">
        <title>The status, quality, and expansion of the NIH full-length cDNA project: the Mammalian Gene Collection (MGC).</title>
        <authorList>
            <consortium name="The MGC Project Team"/>
        </authorList>
    </citation>
    <scope>NUCLEOTIDE SEQUENCE [LARGE SCALE MRNA] (ISOFORM 1)</scope>
    <source>
        <tissue>Mammary gland</tissue>
    </source>
</reference>
<reference key="4">
    <citation type="journal article" date="2001" name="J. Biol. Chem.">
        <title>Ultraviolet B-induced phosphorylation of histone H3 at serine 28 is mediated by MSK1.</title>
        <authorList>
            <person name="Zhong S."/>
            <person name="Jansen C."/>
            <person name="She Q.-B."/>
            <person name="Goto H."/>
            <person name="Inagaki M."/>
            <person name="Bode A.M."/>
            <person name="Ma W.-Y."/>
            <person name="Dong Z."/>
        </authorList>
    </citation>
    <scope>FUNCTION IN PHOSPHORYLATION OF HISTONE H3</scope>
</reference>
<reference key="5">
    <citation type="journal article" date="2001" name="J. Biol. Chem.">
        <title>MSK1 and JNKs mediate phosphorylation of STAT3 in UVA-irradiated mouse epidermal JB6 cells.</title>
        <authorList>
            <person name="Zhang Y."/>
            <person name="Liu G."/>
            <person name="Dong Z."/>
        </authorList>
    </citation>
    <scope>FUNCTION IN PHOSPHORYLATION OF STAT3</scope>
</reference>
<reference key="6">
    <citation type="journal article" date="2002" name="Mol. Cell. Biol.">
        <title>MSK1 and MSK2 are required for the mitogen- and stress-induced phosphorylation of CREB and ATF1 in fibroblasts.</title>
        <authorList>
            <person name="Wiggin G.R."/>
            <person name="Soloaga A."/>
            <person name="Foster J.M."/>
            <person name="Murray-Tait V."/>
            <person name="Cohen P."/>
            <person name="Arthur J.S."/>
        </authorList>
    </citation>
    <scope>FUNCTION IN PHOSPHORYLATION OF CREB1 AND ATF1</scope>
</reference>
<reference evidence="18" key="7">
    <citation type="journal article" date="2003" name="EMBO J.">
        <title>Transcriptional activation of the NF-kappaB p65 subunit by mitogen- and stress-activated protein kinase-1 (MSK1).</title>
        <authorList>
            <person name="Vermeulen L."/>
            <person name="De Wilde G."/>
            <person name="Van Damme P."/>
            <person name="Vanden Berghe W."/>
            <person name="Haegeman G."/>
        </authorList>
    </citation>
    <scope>FUNCTION</scope>
</reference>
<reference key="8">
    <citation type="journal article" date="2003" name="J. Neurochem.">
        <title>Mitogen and stress response kinase-1 (MSK1) mediates excitotoxic induced death of hippocampal neurones.</title>
        <authorList>
            <person name="Hughes J.P."/>
            <person name="Staton P.C."/>
            <person name="Wilkinson M.G."/>
            <person name="Strijbos P.J."/>
            <person name="Skaper S.D."/>
            <person name="Arthur J.S."/>
            <person name="Reith A.D."/>
        </authorList>
    </citation>
    <scope>FUNCTION IN CELL DEATH</scope>
</reference>
<reference key="9">
    <citation type="journal article" date="2005" name="J. Cell Sci.">
        <title>MAP kinase-mediated phosphorylation of distinct pools of histone H3 at S10 or S28 via mitogen- and stress-activated kinase 1/2.</title>
        <authorList>
            <person name="Dyson M.H."/>
            <person name="Thomson S."/>
            <person name="Inagaki M."/>
            <person name="Goto H."/>
            <person name="Arthur S.J."/>
            <person name="Nightingale K."/>
            <person name="Iborra F.J."/>
            <person name="Mahadevan L.C."/>
        </authorList>
    </citation>
    <scope>FUNCTION IN PHOSPHORYLATION OF HISTONE H3</scope>
</reference>
<reference key="10">
    <citation type="journal article" date="2006" name="Cell. Signal.">
        <title>ERK1/2 and p38-MAPK signalling pathways, through MSK1, are involved in NF-kappaB transactivation during oxidative stress in skeletal myoblasts.</title>
        <authorList>
            <person name="Kefaloyianni E."/>
            <person name="Gaitanaki C."/>
            <person name="Beis I."/>
        </authorList>
    </citation>
    <scope>FUNCTION IN PHOSPHORYLATION OF RELA/NFKB3</scope>
</reference>
<reference key="11">
    <citation type="journal article" date="2006" name="J. Biol. Chem.">
        <title>The kinases MSK1 and MSK2 are required for epidermal growth factor-induced, but not tumor necrosis factor-induced, histone H3 Ser10 phosphorylation.</title>
        <authorList>
            <person name="Duncan E.A."/>
            <person name="Anest V."/>
            <person name="Cogswell P."/>
            <person name="Baldwin A.S."/>
        </authorList>
    </citation>
    <scope>FUNCTION IN PHOSPHORYLATION OF HISTONE H3</scope>
</reference>
<reference key="12">
    <citation type="journal article" date="2008" name="Nat. Immunol.">
        <title>The kinases MSK1 and MSK2 act as negative regulators of Toll-like receptor signaling.</title>
        <authorList>
            <person name="Ananieva O."/>
            <person name="Darragh J."/>
            <person name="Johansen C."/>
            <person name="Carr J.M."/>
            <person name="McIlrath J."/>
            <person name="Park J.M."/>
            <person name="Wingate A."/>
            <person name="Monk C.E."/>
            <person name="Toth R."/>
            <person name="Santos S.G."/>
            <person name="Iversen L."/>
            <person name="Arthur J.S."/>
        </authorList>
    </citation>
    <scope>FUNCTION IN PHOSPHORYLATION OF CREB1; ATF1 AND HISTONE H3</scope>
</reference>
<reference key="13">
    <citation type="journal article" date="2010" name="Cell">
        <title>A tissue-specific atlas of mouse protein phosphorylation and expression.</title>
        <authorList>
            <person name="Huttlin E.L."/>
            <person name="Jedrychowski M.P."/>
            <person name="Elias J.E."/>
            <person name="Goswami T."/>
            <person name="Rad R."/>
            <person name="Beausoleil S.A."/>
            <person name="Villen J."/>
            <person name="Haas W."/>
            <person name="Sowa M.E."/>
            <person name="Gygi S.P."/>
        </authorList>
    </citation>
    <scope>PHOSPHORYLATION [LARGE SCALE ANALYSIS] AT SER-755; THR-764 AND SER-862</scope>
    <scope>IDENTIFICATION BY MASS SPECTROMETRY [LARGE SCALE ANALYSIS]</scope>
    <source>
        <tissue>Brain</tissue>
        <tissue>Brown adipose tissue</tissue>
        <tissue>Lung</tissue>
        <tissue>Spleen</tissue>
        <tissue>Testis</tissue>
    </source>
</reference>
<evidence type="ECO:0000250" key="1"/>
<evidence type="ECO:0000250" key="2">
    <source>
        <dbReference type="UniProtKB" id="O75582"/>
    </source>
</evidence>
<evidence type="ECO:0000255" key="3">
    <source>
        <dbReference type="PROSITE-ProRule" id="PRU00159"/>
    </source>
</evidence>
<evidence type="ECO:0000255" key="4">
    <source>
        <dbReference type="PROSITE-ProRule" id="PRU00618"/>
    </source>
</evidence>
<evidence type="ECO:0000256" key="5">
    <source>
        <dbReference type="SAM" id="MobiDB-lite"/>
    </source>
</evidence>
<evidence type="ECO:0000269" key="6">
    <source>
    </source>
</evidence>
<evidence type="ECO:0000269" key="7">
    <source>
    </source>
</evidence>
<evidence type="ECO:0000269" key="8">
    <source>
    </source>
</evidence>
<evidence type="ECO:0000269" key="9">
    <source>
    </source>
</evidence>
<evidence type="ECO:0000269" key="10">
    <source>
    </source>
</evidence>
<evidence type="ECO:0000269" key="11">
    <source>
    </source>
</evidence>
<evidence type="ECO:0000269" key="12">
    <source>
    </source>
</evidence>
<evidence type="ECO:0000269" key="13">
    <source>
    </source>
</evidence>
<evidence type="ECO:0000269" key="14">
    <source>
    </source>
</evidence>
<evidence type="ECO:0000303" key="15">
    <source>
    </source>
</evidence>
<evidence type="ECO:0000303" key="16">
    <source>
    </source>
</evidence>
<evidence type="ECO:0000303" key="17">
    <source ref="1"/>
</evidence>
<evidence type="ECO:0000305" key="18"/>
<evidence type="ECO:0000312" key="19">
    <source>
        <dbReference type="EMBL" id="BAC27809.1"/>
    </source>
</evidence>
<evidence type="ECO:0007744" key="20">
    <source>
    </source>
</evidence>
<gene>
    <name type="primary">Rps6ka5</name>
    <name type="synonym">Msk1</name>
</gene>
<feature type="chain" id="PRO_0000086208" description="Ribosomal protein S6 kinase alpha-5">
    <location>
        <begin position="1"/>
        <end position="863"/>
    </location>
</feature>
<feature type="domain" description="Protein kinase 1" evidence="3">
    <location>
        <begin position="48"/>
        <end position="317"/>
    </location>
</feature>
<feature type="domain" description="AGC-kinase C-terminal" evidence="4">
    <location>
        <begin position="318"/>
        <end position="386"/>
    </location>
</feature>
<feature type="domain" description="Protein kinase 2" evidence="3">
    <location>
        <begin position="428"/>
        <end position="675"/>
    </location>
</feature>
<feature type="region of interest" description="Disordered" evidence="5">
    <location>
        <begin position="1"/>
        <end position="22"/>
    </location>
</feature>
<feature type="region of interest" description="Disordered" evidence="5">
    <location>
        <begin position="805"/>
        <end position="863"/>
    </location>
</feature>
<feature type="compositionally biased region" description="Gly residues" evidence="5">
    <location>
        <begin position="1"/>
        <end position="21"/>
    </location>
</feature>
<feature type="compositionally biased region" description="Low complexity" evidence="5">
    <location>
        <begin position="813"/>
        <end position="832"/>
    </location>
</feature>
<feature type="compositionally biased region" description="Polar residues" evidence="5">
    <location>
        <begin position="833"/>
        <end position="863"/>
    </location>
</feature>
<feature type="active site" description="Proton acceptor" evidence="1">
    <location>
        <position position="176"/>
    </location>
</feature>
<feature type="active site" description="Proton acceptor" evidence="1">
    <location>
        <position position="608"/>
    </location>
</feature>
<feature type="binding site" evidence="3">
    <location>
        <begin position="54"/>
        <end position="62"/>
    </location>
    <ligand>
        <name>ATP</name>
        <dbReference type="ChEBI" id="CHEBI:30616"/>
    </ligand>
</feature>
<feature type="binding site" evidence="3">
    <location>
        <position position="80"/>
    </location>
    <ligand>
        <name>ATP</name>
        <dbReference type="ChEBI" id="CHEBI:30616"/>
    </ligand>
</feature>
<feature type="binding site" evidence="3">
    <location>
        <begin position="431"/>
        <end position="440"/>
    </location>
    <ligand>
        <name>ATP</name>
        <dbReference type="ChEBI" id="CHEBI:30616"/>
    </ligand>
</feature>
<feature type="binding site" evidence="3">
    <location>
        <position position="454"/>
    </location>
    <ligand>
        <name>ATP</name>
        <dbReference type="ChEBI" id="CHEBI:30616"/>
    </ligand>
</feature>
<feature type="modified residue" description="Phosphoserine; by autocatalysis" evidence="2">
    <location>
        <position position="211"/>
    </location>
</feature>
<feature type="modified residue" description="Phosphoserine; by MAPK1, MAPK3 and MAPK14" evidence="2">
    <location>
        <position position="359"/>
    </location>
</feature>
<feature type="modified residue" description="Phosphoserine; by autocatalysis" evidence="2">
    <location>
        <position position="375"/>
    </location>
</feature>
<feature type="modified residue" description="Phosphoserine; by autocatalysis" evidence="2">
    <location>
        <position position="380"/>
    </location>
</feature>
<feature type="modified residue" description="Phosphothreonine; by MAPK1, MAPK3 and MAPK14" evidence="2">
    <location>
        <position position="645"/>
    </location>
</feature>
<feature type="modified residue" description="Phosphoserine" evidence="2">
    <location>
        <position position="711"/>
    </location>
</feature>
<feature type="modified residue" description="Phosphoserine" evidence="2">
    <location>
        <position position="721"/>
    </location>
</feature>
<feature type="modified residue" description="Phosphoserine" evidence="20">
    <location>
        <position position="755"/>
    </location>
</feature>
<feature type="modified residue" description="Phosphoserine" evidence="2">
    <location>
        <position position="759"/>
    </location>
</feature>
<feature type="modified residue" description="Phosphothreonine" evidence="20">
    <location>
        <position position="764"/>
    </location>
</feature>
<feature type="modified residue" description="Phosphoserine; by autocatalysis" evidence="2">
    <location>
        <position position="814"/>
    </location>
</feature>
<feature type="modified residue" description="Phosphoserine; by autocatalysis" evidence="2">
    <location>
        <position position="816"/>
    </location>
</feature>
<feature type="modified residue" description="Phosphoserine; by autocatalysis" evidence="2">
    <location>
        <position position="822"/>
    </location>
</feature>
<feature type="modified residue" description="Phosphoserine" evidence="20">
    <location>
        <position position="862"/>
    </location>
</feature>
<feature type="splice variant" id="VSP_050613" description="In isoform 1." evidence="15 16 17">
    <location>
        <begin position="490"/>
        <end position="554"/>
    </location>
</feature>
<feature type="sequence conflict" description="In Ref. 1; AAQ24165." evidence="18" ref="1">
    <original>EGEGGGSGGAGTSG</original>
    <variation>GGRAAAAAARAPAE</variation>
    <location>
        <begin position="2"/>
        <end position="15"/>
    </location>
</feature>
<feature type="sequence conflict" description="In Ref. 2; BAC27809." evidence="18" ref="2">
    <original>H</original>
    <variation>N</variation>
    <location>
        <position position="117"/>
    </location>
</feature>
<feature type="sequence conflict" description="In Ref. 2; BAC27809." evidence="18" ref="2">
    <original>F</original>
    <variation>Y</variation>
    <location>
        <position position="376"/>
    </location>
</feature>
<name>KS6A5_MOUSE</name>
<comment type="function">
    <text evidence="2 6 7 8 9 10 11 12 13 14">Serine/threonine-protein kinase that is required for the mitogen or stress-induced phosphorylation of the transcription factors CREB1 and ATF1 and for the regulation of the transcription factors RELA, STAT3 and ETV1/ER81, and that contributes to gene activation by histone phosphorylation and functions in the regulation of inflammatory genes (By similarity) (PubMed:11553624, PubMed:11909979, PubMed:16806820). Phosphorylates CREB1 and ATF1 in response to mitogenic or stress stimuli such as UV-C irradiation, epidermal growth factor (EGF) and anisomycin (PubMed:11909979). Plays an essential role in the control of RELA transcriptional activity in response to TNF and upon glucocorticoid, associates in the cytoplasm with the glucocorticoid receptor NR3C1 and contributes to RELA inhibition and repression of inflammatory gene expression (PubMed:12628924, PubMed:16806820). In skeletal myoblasts is required for phosphorylation of RELA at 'Ser-276' during oxidative stress (PubMed:12628924). In erythropoietin-stimulated cells, is necessary for the 'Ser-727' phosphorylation of STAT3 and regulation of its transcriptional potential (PubMed:11553624). Phosphorylates ETV1/ER81 at 'Ser-191' and 'Ser-216', and thereby regulates its ability to stimulate transcription, which may be important during development and breast tumor formation (By similarity). Directly represses transcription via phosphorylation of 'Ser-1' of histone H2A (By similarity). Phosphorylates 'Ser-10' of histone H3 in response to mitogenics, stress stimuli and EGF, which results in the transcriptional activation of several immediate early genes, including proto-oncogenes c-fos/FOS and c-jun/JUN (PubMed:15870105, PubMed:16517600). May also phosphorylate 'Ser-28' of histone H3 (PubMed:11441012, PubMed:15870105). Mediates the mitogen- and stress-induced phosphorylation of high mobility group protein 1 (HMGN1/HMG14) (By similarity). In lipopolysaccharide-stimulated primary macrophages, acts downstream of the Toll-like receptor TLR4 to limit the production of pro-inflammatory cytokines (PubMed:18690222). Functions probably by inducing transcription of the MAP kinase phosphatase DUSP1 and the anti-inflammatory cytokine interleukin 10 (IL10), via CREB1 and ATF1 transcription factors (PubMed:18690222). Plays a role in neuronal cell death by mediating the downstream effects of excitotoxic injury (PubMed:12807421). Phosphorylates TRIM7 at 'Ser-106' in response to growth factor signaling via the MEK/ERK pathway, thereby stimulating its ubiquitin ligase activity (By similarity).</text>
</comment>
<comment type="catalytic activity">
    <reaction evidence="9">
        <text>L-seryl-[protein] + ATP = O-phospho-L-seryl-[protein] + ADP + H(+)</text>
        <dbReference type="Rhea" id="RHEA:17989"/>
        <dbReference type="Rhea" id="RHEA-COMP:9863"/>
        <dbReference type="Rhea" id="RHEA-COMP:11604"/>
        <dbReference type="ChEBI" id="CHEBI:15378"/>
        <dbReference type="ChEBI" id="CHEBI:29999"/>
        <dbReference type="ChEBI" id="CHEBI:30616"/>
        <dbReference type="ChEBI" id="CHEBI:83421"/>
        <dbReference type="ChEBI" id="CHEBI:456216"/>
        <dbReference type="EC" id="2.7.11.1"/>
    </reaction>
</comment>
<comment type="catalytic activity">
    <reaction evidence="9">
        <text>L-threonyl-[protein] + ATP = O-phospho-L-threonyl-[protein] + ADP + H(+)</text>
        <dbReference type="Rhea" id="RHEA:46608"/>
        <dbReference type="Rhea" id="RHEA-COMP:11060"/>
        <dbReference type="Rhea" id="RHEA-COMP:11605"/>
        <dbReference type="ChEBI" id="CHEBI:15378"/>
        <dbReference type="ChEBI" id="CHEBI:30013"/>
        <dbReference type="ChEBI" id="CHEBI:30616"/>
        <dbReference type="ChEBI" id="CHEBI:61977"/>
        <dbReference type="ChEBI" id="CHEBI:456216"/>
        <dbReference type="EC" id="2.7.11.1"/>
    </reaction>
</comment>
<comment type="cofactor">
    <cofactor evidence="1">
        <name>Mg(2+)</name>
        <dbReference type="ChEBI" id="CHEBI:18420"/>
    </cofactor>
</comment>
<comment type="activity regulation">
    <text>Activated by phosphorylation at Ser-359, Thr-645 and Thr-764 by MAPK1/ERK2, MAPK3/ERK1 and MAPK14/p38-alpha, and by further autophosphorylation of Ser-211, Ser-375 and Ser-380 by the activated C-terminal kinase domain. The active N-terminal kinase domain finally phosphorylates downstream substrates, as well as Ser-814, Ser-816 and Ser-822 in its own C-terminal region.</text>
</comment>
<comment type="subunit">
    <text evidence="1">Forms a complex with either MAPK1/ERK2 or MAPK3/ERK1 in quiescent cells which transiently dissociates following mitogenic stimulation. Also associates with MAPK14/p38-alpha. Activated RPS6KA5 associates with and phosphorylates the NF-kappa-B p65 subunit RELA. Interacts with CREBBP and EP300 (By similarity).</text>
</comment>
<comment type="interaction">
    <interactant intactId="EBI-8391218">
        <id>Q8C050</id>
    </interactant>
    <interactant intactId="EBI-346736">
        <id>P11416</id>
        <label>Rara</label>
    </interactant>
    <organismsDiffer>false</organismsDiffer>
    <experiments>2</experiments>
</comment>
<comment type="subcellular location">
    <subcellularLocation>
        <location evidence="1">Nucleus</location>
    </subcellularLocation>
</comment>
<comment type="alternative products">
    <event type="alternative splicing"/>
    <isoform>
        <id>Q8C050-1</id>
        <name evidence="18">2</name>
        <sequence type="displayed"/>
    </isoform>
    <isoform>
        <id>Q8C050-2</id>
        <name evidence="18">1</name>
        <name evidence="18">5</name>
        <sequence type="described" ref="VSP_050613"/>
    </isoform>
</comment>
<comment type="PTM">
    <text evidence="1">Ser-375 and Thr-645 phosphorylation is required for kinase activity. Ser-375 and Ser-211 are autophosphorylated by the C-terminal kinase domain, and their phosphorylation is essential for the catalytic activity of the N-terminal kinase domain. Phosphorylated at Ser-359, Thr-645 and Thr-764 by MAPK1/ERK2, MAPK3/ERK1 and MAPK14/p38-alpha. Autophosphorylated at Ser-814, Ser-816 and Ser-822 by the N-terminal kinase domain (By similarity).</text>
</comment>
<comment type="PTM">
    <text evidence="1">Ubiquitinated.</text>
</comment>
<comment type="miscellaneous">
    <text evidence="2">Enzyme activity requires the presence of both kinase domains.</text>
</comment>
<comment type="similarity">
    <text evidence="18">Belongs to the protein kinase superfamily. AGC Ser/Thr protein kinase family. S6 kinase subfamily.</text>
</comment>
<organism evidence="19">
    <name type="scientific">Mus musculus</name>
    <name type="common">Mouse</name>
    <dbReference type="NCBI Taxonomy" id="10090"/>
    <lineage>
        <taxon>Eukaryota</taxon>
        <taxon>Metazoa</taxon>
        <taxon>Chordata</taxon>
        <taxon>Craniata</taxon>
        <taxon>Vertebrata</taxon>
        <taxon>Euteleostomi</taxon>
        <taxon>Mammalia</taxon>
        <taxon>Eutheria</taxon>
        <taxon>Euarchontoglires</taxon>
        <taxon>Glires</taxon>
        <taxon>Rodentia</taxon>
        <taxon>Myomorpha</taxon>
        <taxon>Muroidea</taxon>
        <taxon>Muridae</taxon>
        <taxon>Murinae</taxon>
        <taxon>Mus</taxon>
        <taxon>Mus</taxon>
    </lineage>
</organism>
<keyword id="KW-0025">Alternative splicing</keyword>
<keyword id="KW-0067">ATP-binding</keyword>
<keyword id="KW-0395">Inflammatory response</keyword>
<keyword id="KW-0418">Kinase</keyword>
<keyword id="KW-0547">Nucleotide-binding</keyword>
<keyword id="KW-0539">Nucleus</keyword>
<keyword id="KW-0597">Phosphoprotein</keyword>
<keyword id="KW-1185">Reference proteome</keyword>
<keyword id="KW-0677">Repeat</keyword>
<keyword id="KW-0723">Serine/threonine-protein kinase</keyword>
<keyword id="KW-0346">Stress response</keyword>
<keyword id="KW-0808">Transferase</keyword>
<keyword id="KW-0832">Ubl conjugation</keyword>
<accession>Q8C050</accession>
<accession>Q8CI92</accession>
<protein>
    <recommendedName>
        <fullName>Ribosomal protein S6 kinase alpha-5</fullName>
        <shortName>S6K-alpha-5</shortName>
        <ecNumber>2.7.11.1</ecNumber>
    </recommendedName>
    <alternativeName>
        <fullName>90 kDa ribosomal protein S6 kinase 5</fullName>
    </alternativeName>
    <alternativeName>
        <fullName>Nuclear mitogen- and stress-activated protein kinase 1</fullName>
    </alternativeName>
    <alternativeName>
        <fullName>RSK-like protein kinase</fullName>
        <shortName>RLSK</shortName>
    </alternativeName>
</protein>
<proteinExistence type="evidence at protein level"/>
<sequence length="863" mass="96583">MEGEGGGSGGAGTSGDSGDGGEQLLTVKHELRTANLTGHAEKVGIENFELLKVLGTGAYGKVFLVRKISGHDAGKLYAMKVLKKATIVQKAKTTEHTRTERQVLEHIRQSPFLVTLHYAFQTETKLHLILDYINGGELFTHLSQRERFTEHEVQIYVGEIVLALEHLHKLGIIYRDIKLENILLDSNGHVVLTDFGLSKEFVADETERAYSFCGTIEYMAPDIVRGGDSGHDKAVDWWSLGVLMYELLTGASPFTVDGEKNSQAEISRRILKSEPPYPQEMSTVAKDLLQRLLMKDPKKRLGCGPRDAEEIKEHLFFEKIKWDDLAAKKVPAPFKPVIRDELDVSNFAEEFTEMDPTYSPAALPQSSERLFQGYSFVAPSILFKRNAAVIDPLQFHMGVDRPGVTNVARSAMMKDSPFYQHYDLDLKDKPLGEGSFSICRKCVHKKTNQAFAVKIISKRMEANTQKEITALKLCEGHPNIVKLHEVFHDQVAASAQPPGQVVLCSLLLLALLFNRSLTRKPVTWTWLVHSTSQLPPLPPPMPEIVLFILLSDNGQLHTFLVMELLNGGELFERIKRKKHFSETEASYIMRKLVSAVSHMHDVGVVHRDLKPENLLFTDENDNLEIKVIDFGFARLKPPDNQPLKTPCFTLHYAAPELLTHNGYDESCDLWSLGVILYTMLSGQVPFQSHDRSLTCTSAVEIMKKIKKGDFSFEGEAWKNVSQEAKDLIQGLLTVDPNKRLKMSGLRYNEWLQDGSQLSSNPLMTPDILGSSGAAVHTCVKATFHAFNKYKREGFCLQNVDKAPLAKRRKMKRTSTSTETRSSSSESSRSSSSQSHGKTTPTKTLQPSNPTEGSNPDTLFQFSD</sequence>
<dbReference type="EC" id="2.7.11.1"/>
<dbReference type="EMBL" id="AY341873">
    <property type="protein sequence ID" value="AAQ24158.1"/>
    <property type="molecule type" value="mRNA"/>
</dbReference>
<dbReference type="EMBL" id="AY341881">
    <property type="protein sequence ID" value="AAQ24165.1"/>
    <property type="molecule type" value="mRNA"/>
</dbReference>
<dbReference type="EMBL" id="AK032316">
    <property type="protein sequence ID" value="BAC27809.1"/>
    <property type="molecule type" value="mRNA"/>
</dbReference>
<dbReference type="EMBL" id="BC035298">
    <property type="protein sequence ID" value="AAH35298.1"/>
    <property type="molecule type" value="mRNA"/>
</dbReference>
<dbReference type="CCDS" id="CCDS26107.1">
    <molecule id="Q8C050-1"/>
</dbReference>
<dbReference type="CCDS" id="CCDS88388.1">
    <molecule id="Q8C050-2"/>
</dbReference>
<dbReference type="RefSeq" id="NP_001317631.1">
    <molecule id="Q8C050-2"/>
    <property type="nucleotide sequence ID" value="NM_001330702.1"/>
</dbReference>
<dbReference type="RefSeq" id="NP_705815.1">
    <molecule id="Q8C050-1"/>
    <property type="nucleotide sequence ID" value="NM_153587.3"/>
</dbReference>
<dbReference type="SMR" id="Q8C050"/>
<dbReference type="BioGRID" id="215759">
    <property type="interactions" value="12"/>
</dbReference>
<dbReference type="FunCoup" id="Q8C050">
    <property type="interactions" value="4806"/>
</dbReference>
<dbReference type="IntAct" id="Q8C050">
    <property type="interactions" value="2"/>
</dbReference>
<dbReference type="MINT" id="Q8C050"/>
<dbReference type="STRING" id="10090.ENSMUSP00000042987"/>
<dbReference type="iPTMnet" id="Q8C050"/>
<dbReference type="PhosphoSitePlus" id="Q8C050"/>
<dbReference type="PaxDb" id="10090-ENSMUSP00000042987"/>
<dbReference type="PeptideAtlas" id="Q8C050"/>
<dbReference type="ProteomicsDB" id="264876">
    <molecule id="Q8C050-1"/>
</dbReference>
<dbReference type="ProteomicsDB" id="264877">
    <molecule id="Q8C050-2"/>
</dbReference>
<dbReference type="Pumba" id="Q8C050"/>
<dbReference type="Antibodypedia" id="83">
    <property type="antibodies" value="946 antibodies from 42 providers"/>
</dbReference>
<dbReference type="DNASU" id="73086"/>
<dbReference type="Ensembl" id="ENSMUST00000043599.7">
    <molecule id="Q8C050-1"/>
    <property type="protein sequence ID" value="ENSMUSP00000042987.7"/>
    <property type="gene ID" value="ENSMUSG00000021180.10"/>
</dbReference>
<dbReference type="Ensembl" id="ENSMUST00000222731.2">
    <molecule id="Q8C050-2"/>
    <property type="protein sequence ID" value="ENSMUSP00000152481.2"/>
    <property type="gene ID" value="ENSMUSG00000021180.10"/>
</dbReference>
<dbReference type="GeneID" id="73086"/>
<dbReference type="KEGG" id="mmu:73086"/>
<dbReference type="UCSC" id="uc007ost.1">
    <molecule id="Q8C050-1"/>
    <property type="organism name" value="mouse"/>
</dbReference>
<dbReference type="UCSC" id="uc007osu.1">
    <molecule id="Q8C050-2"/>
    <property type="organism name" value="mouse"/>
</dbReference>
<dbReference type="AGR" id="MGI:1920336"/>
<dbReference type="CTD" id="9252"/>
<dbReference type="MGI" id="MGI:1920336">
    <property type="gene designation" value="Rps6ka5"/>
</dbReference>
<dbReference type="VEuPathDB" id="HostDB:ENSMUSG00000021180"/>
<dbReference type="eggNOG" id="KOG0603">
    <property type="taxonomic scope" value="Eukaryota"/>
</dbReference>
<dbReference type="GeneTree" id="ENSGT00940000156886"/>
<dbReference type="HOGENOM" id="CLU_000288_58_0_1"/>
<dbReference type="InParanoid" id="Q8C050"/>
<dbReference type="OMA" id="VEMIYAF"/>
<dbReference type="OrthoDB" id="6764942at2759"/>
<dbReference type="PhylomeDB" id="Q8C050"/>
<dbReference type="TreeFam" id="TF313438"/>
<dbReference type="Reactome" id="R-MMU-198753">
    <property type="pathway name" value="ERK/MAPK targets"/>
</dbReference>
<dbReference type="Reactome" id="R-MMU-199920">
    <property type="pathway name" value="CREB phosphorylation"/>
</dbReference>
<dbReference type="Reactome" id="R-MMU-375165">
    <property type="pathway name" value="NCAM signaling for neurite out-growth"/>
</dbReference>
<dbReference type="Reactome" id="R-MMU-5621575">
    <property type="pathway name" value="CD209 (DC-SIGN) signaling"/>
</dbReference>
<dbReference type="BioGRID-ORCS" id="73086">
    <property type="hits" value="3 hits in 83 CRISPR screens"/>
</dbReference>
<dbReference type="ChiTaRS" id="Rps6ka5">
    <property type="organism name" value="mouse"/>
</dbReference>
<dbReference type="PRO" id="PR:Q8C050"/>
<dbReference type="Proteomes" id="UP000000589">
    <property type="component" value="Chromosome 12"/>
</dbReference>
<dbReference type="RNAct" id="Q8C050">
    <property type="molecule type" value="protein"/>
</dbReference>
<dbReference type="Bgee" id="ENSMUSG00000021180">
    <property type="expression patterns" value="Expressed in dorsal striatum and 222 other cell types or tissues"/>
</dbReference>
<dbReference type="ExpressionAtlas" id="Q8C050">
    <property type="expression patterns" value="baseline and differential"/>
</dbReference>
<dbReference type="GO" id="GO:0005737">
    <property type="term" value="C:cytoplasm"/>
    <property type="evidence" value="ECO:0000250"/>
    <property type="project" value="UniProtKB"/>
</dbReference>
<dbReference type="GO" id="GO:0005654">
    <property type="term" value="C:nucleoplasm"/>
    <property type="evidence" value="ECO:0007669"/>
    <property type="project" value="Ensembl"/>
</dbReference>
<dbReference type="GO" id="GO:0005634">
    <property type="term" value="C:nucleus"/>
    <property type="evidence" value="ECO:0000314"/>
    <property type="project" value="UniProtKB"/>
</dbReference>
<dbReference type="GO" id="GO:0005524">
    <property type="term" value="F:ATP binding"/>
    <property type="evidence" value="ECO:0000314"/>
    <property type="project" value="UniProtKB"/>
</dbReference>
<dbReference type="GO" id="GO:0044024">
    <property type="term" value="F:histone H2AS1 kinase activity"/>
    <property type="evidence" value="ECO:0000250"/>
    <property type="project" value="UniProtKB"/>
</dbReference>
<dbReference type="GO" id="GO:0035175">
    <property type="term" value="F:histone H3S10 kinase activity"/>
    <property type="evidence" value="ECO:0000250"/>
    <property type="project" value="UniProtKB"/>
</dbReference>
<dbReference type="GO" id="GO:0044022">
    <property type="term" value="F:histone H3S28 kinase activity"/>
    <property type="evidence" value="ECO:0000250"/>
    <property type="project" value="UniProtKB"/>
</dbReference>
<dbReference type="GO" id="GO:0000287">
    <property type="term" value="F:magnesium ion binding"/>
    <property type="evidence" value="ECO:0007669"/>
    <property type="project" value="InterPro"/>
</dbReference>
<dbReference type="GO" id="GO:0106310">
    <property type="term" value="F:protein serine kinase activity"/>
    <property type="evidence" value="ECO:0007669"/>
    <property type="project" value="RHEA"/>
</dbReference>
<dbReference type="GO" id="GO:0004674">
    <property type="term" value="F:protein serine/threonine kinase activity"/>
    <property type="evidence" value="ECO:0000314"/>
    <property type="project" value="UniProtKB"/>
</dbReference>
<dbReference type="GO" id="GO:0004713">
    <property type="term" value="F:protein tyrosine kinase activity"/>
    <property type="evidence" value="ECO:0007669"/>
    <property type="project" value="Ensembl"/>
</dbReference>
<dbReference type="GO" id="GO:0006954">
    <property type="term" value="P:inflammatory response"/>
    <property type="evidence" value="ECO:0007669"/>
    <property type="project" value="UniProtKB-KW"/>
</dbReference>
<dbReference type="GO" id="GO:0070498">
    <property type="term" value="P:interleukin-1-mediated signaling pathway"/>
    <property type="evidence" value="ECO:0007669"/>
    <property type="project" value="Ensembl"/>
</dbReference>
<dbReference type="GO" id="GO:0035556">
    <property type="term" value="P:intracellular signal transduction"/>
    <property type="evidence" value="ECO:0000314"/>
    <property type="project" value="UniProtKB"/>
</dbReference>
<dbReference type="GO" id="GO:0045892">
    <property type="term" value="P:negative regulation of DNA-templated transcription"/>
    <property type="evidence" value="ECO:0000250"/>
    <property type="project" value="UniProtKB"/>
</dbReference>
<dbReference type="GO" id="GO:0051092">
    <property type="term" value="P:positive regulation of NF-kappaB transcription factor activity"/>
    <property type="evidence" value="ECO:0000250"/>
    <property type="project" value="UniProtKB"/>
</dbReference>
<dbReference type="GO" id="GO:0045944">
    <property type="term" value="P:positive regulation of transcription by RNA polymerase II"/>
    <property type="evidence" value="ECO:0007669"/>
    <property type="project" value="Ensembl"/>
</dbReference>
<dbReference type="GO" id="GO:0043687">
    <property type="term" value="P:post-translational protein modification"/>
    <property type="evidence" value="ECO:0000250"/>
    <property type="project" value="UniProtKB"/>
</dbReference>
<dbReference type="GO" id="GO:0006468">
    <property type="term" value="P:protein phosphorylation"/>
    <property type="evidence" value="ECO:0000314"/>
    <property type="project" value="UniProtKB"/>
</dbReference>
<dbReference type="GO" id="GO:0006355">
    <property type="term" value="P:regulation of DNA-templated transcription"/>
    <property type="evidence" value="ECO:0000314"/>
    <property type="project" value="UniProtKB"/>
</dbReference>
<dbReference type="GO" id="GO:0099175">
    <property type="term" value="P:regulation of postsynapse organization"/>
    <property type="evidence" value="ECO:0000314"/>
    <property type="project" value="SynGO"/>
</dbReference>
<dbReference type="CDD" id="cd14179">
    <property type="entry name" value="STKc_MSK1_C"/>
    <property type="match status" value="1"/>
</dbReference>
<dbReference type="FunFam" id="3.30.200.20:FF:000648">
    <property type="entry name" value="Non-specific serine/threonine protein kinase"/>
    <property type="match status" value="1"/>
</dbReference>
<dbReference type="FunFam" id="1.10.510.10:FF:000109">
    <property type="entry name" value="Ribosomal protein S6 kinase"/>
    <property type="match status" value="1"/>
</dbReference>
<dbReference type="FunFam" id="1.10.510.10:FF:000157">
    <property type="entry name" value="Ribosomal protein S6 kinase"/>
    <property type="match status" value="1"/>
</dbReference>
<dbReference type="FunFam" id="3.30.200.20:FF:000208">
    <property type="entry name" value="Ribosomal protein S6 kinase"/>
    <property type="match status" value="1"/>
</dbReference>
<dbReference type="FunFam" id="3.30.200.20:FF:000686">
    <property type="entry name" value="Ribosomal protein S6 kinase"/>
    <property type="match status" value="1"/>
</dbReference>
<dbReference type="Gene3D" id="3.30.200.20">
    <property type="entry name" value="Phosphorylase Kinase, domain 1"/>
    <property type="match status" value="2"/>
</dbReference>
<dbReference type="Gene3D" id="1.10.510.10">
    <property type="entry name" value="Transferase(Phosphotransferase) domain 1"/>
    <property type="match status" value="2"/>
</dbReference>
<dbReference type="InterPro" id="IPR000961">
    <property type="entry name" value="AGC-kinase_C"/>
</dbReference>
<dbReference type="InterPro" id="IPR011009">
    <property type="entry name" value="Kinase-like_dom_sf"/>
</dbReference>
<dbReference type="InterPro" id="IPR017892">
    <property type="entry name" value="Pkinase_C"/>
</dbReference>
<dbReference type="InterPro" id="IPR000719">
    <property type="entry name" value="Prot_kinase_dom"/>
</dbReference>
<dbReference type="InterPro" id="IPR017441">
    <property type="entry name" value="Protein_kinase_ATP_BS"/>
</dbReference>
<dbReference type="InterPro" id="IPR016239">
    <property type="entry name" value="Ribosomal_S6_kinase_II"/>
</dbReference>
<dbReference type="InterPro" id="IPR008271">
    <property type="entry name" value="Ser/Thr_kinase_AS"/>
</dbReference>
<dbReference type="PANTHER" id="PTHR24351">
    <property type="entry name" value="RIBOSOMAL PROTEIN S6 KINASE"/>
    <property type="match status" value="1"/>
</dbReference>
<dbReference type="Pfam" id="PF00069">
    <property type="entry name" value="Pkinase"/>
    <property type="match status" value="3"/>
</dbReference>
<dbReference type="Pfam" id="PF00433">
    <property type="entry name" value="Pkinase_C"/>
    <property type="match status" value="1"/>
</dbReference>
<dbReference type="PIRSF" id="PIRSF000606">
    <property type="entry name" value="Ribsml_S6_kin_2"/>
    <property type="match status" value="1"/>
</dbReference>
<dbReference type="SMART" id="SM00133">
    <property type="entry name" value="S_TK_X"/>
    <property type="match status" value="1"/>
</dbReference>
<dbReference type="SMART" id="SM00220">
    <property type="entry name" value="S_TKc"/>
    <property type="match status" value="2"/>
</dbReference>
<dbReference type="SUPFAM" id="SSF56112">
    <property type="entry name" value="Protein kinase-like (PK-like)"/>
    <property type="match status" value="2"/>
</dbReference>
<dbReference type="PROSITE" id="PS51285">
    <property type="entry name" value="AGC_KINASE_CTER"/>
    <property type="match status" value="1"/>
</dbReference>
<dbReference type="PROSITE" id="PS00107">
    <property type="entry name" value="PROTEIN_KINASE_ATP"/>
    <property type="match status" value="2"/>
</dbReference>
<dbReference type="PROSITE" id="PS50011">
    <property type="entry name" value="PROTEIN_KINASE_DOM"/>
    <property type="match status" value="2"/>
</dbReference>
<dbReference type="PROSITE" id="PS00108">
    <property type="entry name" value="PROTEIN_KINASE_ST"/>
    <property type="match status" value="2"/>
</dbReference>